<name>ACTT3_HUMAN</name>
<sequence length="372" mass="41008">MNHCQLPVVIDNGSGMIKAGVAGCREPQFIYPNIIGRAKGQSRAAQGGLELCVGDQAQDWRSSLFISYPVERGLITSWEDMEIMWKHIYDYNLKLKPCDGPVLITEPALNPLANRQQITEMFFEHLGVPAFYMSIQAVLALFAAGFTTGLVLNSGAGVTQSVPIFEGYCLPHGVQQLDLAGLDLTNYLMVLMKNHGIMLLSASDRKIVEDIKESFCYVAMNYEEEMAKKPDCLEKVYQLPDGKVIQLHDQLFSCPEALFSPCHMNLEAPGIDKICFSSIMKCDTGLRNSFFSNIILAGGSTSFPGLDKRLVKDIAKVAPANTAVQVIAPPERKISVWMGGSILASLSAFQDMWITAAEFKEVGPNIVHQRCF</sequence>
<evidence type="ECO:0000250" key="1"/>
<evidence type="ECO:0000269" key="2">
    <source>
    </source>
</evidence>
<evidence type="ECO:0000305" key="3"/>
<protein>
    <recommendedName>
        <fullName>Actin-related protein T3</fullName>
        <shortName>ARP-T3</shortName>
    </recommendedName>
    <alternativeName>
        <fullName>Actin-related protein M1</fullName>
    </alternativeName>
</protein>
<dbReference type="EMBL" id="AB049117">
    <property type="protein sequence ID" value="BAB39481.1"/>
    <property type="molecule type" value="mRNA"/>
</dbReference>
<dbReference type="EMBL" id="AK055346">
    <property type="protein sequence ID" value="BAB70906.1"/>
    <property type="molecule type" value="mRNA"/>
</dbReference>
<dbReference type="EMBL" id="AC078802">
    <property type="status" value="NOT_ANNOTATED_CDS"/>
    <property type="molecule type" value="Genomic_DNA"/>
</dbReference>
<dbReference type="EMBL" id="BC007289">
    <property type="protein sequence ID" value="AAH07289.1"/>
    <property type="molecule type" value="mRNA"/>
</dbReference>
<dbReference type="CCDS" id="CCDS3206.1"/>
<dbReference type="RefSeq" id="NP_115876.3">
    <property type="nucleotide sequence ID" value="NM_032487.4"/>
</dbReference>
<dbReference type="SMR" id="Q9BYD9"/>
<dbReference type="BioGRID" id="124111">
    <property type="interactions" value="1"/>
</dbReference>
<dbReference type="FunCoup" id="Q9BYD9">
    <property type="interactions" value="11"/>
</dbReference>
<dbReference type="IntAct" id="Q9BYD9">
    <property type="interactions" value="1"/>
</dbReference>
<dbReference type="STRING" id="9606.ENSP00000333037"/>
<dbReference type="BioMuta" id="ACTRT3"/>
<dbReference type="DMDM" id="47116738"/>
<dbReference type="MassIVE" id="Q9BYD9"/>
<dbReference type="PaxDb" id="9606-ENSP00000333037"/>
<dbReference type="PeptideAtlas" id="Q9BYD9"/>
<dbReference type="ProteomicsDB" id="79622"/>
<dbReference type="Antibodypedia" id="33699">
    <property type="antibodies" value="132 antibodies from 23 providers"/>
</dbReference>
<dbReference type="DNASU" id="84517"/>
<dbReference type="Ensembl" id="ENST00000330368.3">
    <property type="protein sequence ID" value="ENSP00000333037.1"/>
    <property type="gene ID" value="ENSG00000184378.3"/>
</dbReference>
<dbReference type="GeneID" id="84517"/>
<dbReference type="KEGG" id="hsa:84517"/>
<dbReference type="MANE-Select" id="ENST00000330368.3">
    <property type="protein sequence ID" value="ENSP00000333037.1"/>
    <property type="RefSeq nucleotide sequence ID" value="NM_032487.5"/>
    <property type="RefSeq protein sequence ID" value="NP_115876.3"/>
</dbReference>
<dbReference type="UCSC" id="uc003ffs.3">
    <property type="organism name" value="human"/>
</dbReference>
<dbReference type="AGR" id="HGNC:24022"/>
<dbReference type="CTD" id="84517"/>
<dbReference type="DisGeNET" id="84517"/>
<dbReference type="GeneCards" id="ACTRT3"/>
<dbReference type="HGNC" id="HGNC:24022">
    <property type="gene designation" value="ACTRT3"/>
</dbReference>
<dbReference type="HPA" id="ENSG00000184378">
    <property type="expression patterns" value="Tissue enriched (testis)"/>
</dbReference>
<dbReference type="MIM" id="608534">
    <property type="type" value="gene"/>
</dbReference>
<dbReference type="neXtProt" id="NX_Q9BYD9"/>
<dbReference type="OpenTargets" id="ENSG00000184378"/>
<dbReference type="VEuPathDB" id="HostDB:ENSG00000184378"/>
<dbReference type="eggNOG" id="KOG0676">
    <property type="taxonomic scope" value="Eukaryota"/>
</dbReference>
<dbReference type="GeneTree" id="ENSGT00940000162209"/>
<dbReference type="HOGENOM" id="CLU_027965_0_2_1"/>
<dbReference type="InParanoid" id="Q9BYD9"/>
<dbReference type="OMA" id="WEDMEIM"/>
<dbReference type="OrthoDB" id="6953074at2759"/>
<dbReference type="PAN-GO" id="Q9BYD9">
    <property type="GO annotations" value="0 GO annotations based on evolutionary models"/>
</dbReference>
<dbReference type="PhylomeDB" id="Q9BYD9"/>
<dbReference type="TreeFam" id="TF337161"/>
<dbReference type="PathwayCommons" id="Q9BYD9"/>
<dbReference type="SignaLink" id="Q9BYD9"/>
<dbReference type="BioGRID-ORCS" id="84517">
    <property type="hits" value="30 hits in 1154 CRISPR screens"/>
</dbReference>
<dbReference type="GenomeRNAi" id="84517"/>
<dbReference type="Pharos" id="Q9BYD9">
    <property type="development level" value="Tdark"/>
</dbReference>
<dbReference type="PRO" id="PR:Q9BYD9"/>
<dbReference type="Proteomes" id="UP000005640">
    <property type="component" value="Chromosome 3"/>
</dbReference>
<dbReference type="RNAct" id="Q9BYD9">
    <property type="molecule type" value="protein"/>
</dbReference>
<dbReference type="Bgee" id="ENSG00000184378">
    <property type="expression patterns" value="Expressed in sperm and 107 other cell types or tissues"/>
</dbReference>
<dbReference type="GO" id="GO:0015629">
    <property type="term" value="C:actin cytoskeleton"/>
    <property type="evidence" value="ECO:0000318"/>
    <property type="project" value="GO_Central"/>
</dbReference>
<dbReference type="GO" id="GO:0005737">
    <property type="term" value="C:cytoplasm"/>
    <property type="evidence" value="ECO:0007669"/>
    <property type="project" value="UniProtKB-SubCell"/>
</dbReference>
<dbReference type="GO" id="GO:0001673">
    <property type="term" value="C:male germ cell nucleus"/>
    <property type="evidence" value="ECO:0007669"/>
    <property type="project" value="Ensembl"/>
</dbReference>
<dbReference type="CDD" id="cd13397">
    <property type="entry name" value="ASKHA_NBD_actin_Arp-T1-3"/>
    <property type="match status" value="1"/>
</dbReference>
<dbReference type="FunFam" id="3.90.640.10:FF:000007">
    <property type="entry name" value="Actin like 7B"/>
    <property type="match status" value="1"/>
</dbReference>
<dbReference type="FunFam" id="3.30.420.40:FF:000050">
    <property type="entry name" value="Actin, alpha skeletal muscle"/>
    <property type="match status" value="1"/>
</dbReference>
<dbReference type="Gene3D" id="3.30.420.40">
    <property type="match status" value="2"/>
</dbReference>
<dbReference type="Gene3D" id="3.90.640.10">
    <property type="entry name" value="Actin, Chain A, domain 4"/>
    <property type="match status" value="1"/>
</dbReference>
<dbReference type="InterPro" id="IPR004000">
    <property type="entry name" value="Actin"/>
</dbReference>
<dbReference type="InterPro" id="IPR020902">
    <property type="entry name" value="Actin/actin-like_CS"/>
</dbReference>
<dbReference type="InterPro" id="IPR043129">
    <property type="entry name" value="ATPase_NBD"/>
</dbReference>
<dbReference type="PANTHER" id="PTHR11937">
    <property type="entry name" value="ACTIN"/>
    <property type="match status" value="1"/>
</dbReference>
<dbReference type="Pfam" id="PF00022">
    <property type="entry name" value="Actin"/>
    <property type="match status" value="1"/>
</dbReference>
<dbReference type="PRINTS" id="PR00190">
    <property type="entry name" value="ACTIN"/>
</dbReference>
<dbReference type="SMART" id="SM00268">
    <property type="entry name" value="ACTIN"/>
    <property type="match status" value="1"/>
</dbReference>
<dbReference type="SUPFAM" id="SSF53067">
    <property type="entry name" value="Actin-like ATPase domain"/>
    <property type="match status" value="2"/>
</dbReference>
<dbReference type="PROSITE" id="PS01132">
    <property type="entry name" value="ACTINS_ACT_LIKE"/>
    <property type="match status" value="1"/>
</dbReference>
<proteinExistence type="evidence at protein level"/>
<comment type="subunit">
    <text evidence="1">Interacts with PFN3.</text>
</comment>
<comment type="interaction">
    <interactant intactId="EBI-54800784">
        <id>Q9BYD9</id>
    </interactant>
    <interactant intactId="EBI-2555126">
        <id>Q9H2J4</id>
        <label>PDCL3</label>
    </interactant>
    <organismsDiffer>false</organismsDiffer>
    <experiments>2</experiments>
</comment>
<comment type="subcellular location">
    <subcellularLocation>
        <location evidence="1">Cytoplasm</location>
        <location evidence="1">Cytoskeleton</location>
    </subcellularLocation>
    <subcellularLocation>
        <location evidence="1">Cytoplasm</location>
    </subcellularLocation>
    <subcellularLocation>
        <location evidence="1">Nucleus</location>
    </subcellularLocation>
</comment>
<comment type="tissue specificity">
    <text evidence="2">Ubiquitously expressed.</text>
</comment>
<comment type="similarity">
    <text evidence="3">Belongs to the actin family.</text>
</comment>
<feature type="chain" id="PRO_0000089142" description="Actin-related protein T3">
    <location>
        <begin position="1"/>
        <end position="372"/>
    </location>
</feature>
<feature type="sequence variant" id="VAR_055483" description="In dbSNP:rs2068178.">
    <original>E</original>
    <variation>K</variation>
    <location>
        <position position="234"/>
    </location>
</feature>
<feature type="sequence conflict" description="In Ref. 3; AAH07289." evidence="3" ref="3">
    <original>W</original>
    <variation>C</variation>
    <location>
        <position position="78"/>
    </location>
</feature>
<feature type="sequence conflict" description="In Ref. 2; BAB70906." evidence="3" ref="2">
    <original>C</original>
    <variation>R</variation>
    <location>
        <position position="282"/>
    </location>
</feature>
<accession>Q9BYD9</accession>
<accession>Q96IS0</accession>
<accession>Q96NJ0</accession>
<gene>
    <name type="primary">ACTRT3</name>
    <name type="synonym">ARPM1</name>
</gene>
<reference key="1">
    <citation type="journal article" date="2001" name="Biochim. Biophys. Acta">
        <title>Identification of two cDNAs for human actin-related proteins (Arps) that have remarkable similarity to conventional actin.</title>
        <authorList>
            <person name="Harata M."/>
            <person name="Nishimori K."/>
            <person name="Hatta S."/>
        </authorList>
    </citation>
    <scope>NUCLEOTIDE SEQUENCE [MRNA]</scope>
    <scope>TISSUE SPECIFICITY</scope>
</reference>
<reference key="2">
    <citation type="journal article" date="2004" name="Nat. Genet.">
        <title>Complete sequencing and characterization of 21,243 full-length human cDNAs.</title>
        <authorList>
            <person name="Ota T."/>
            <person name="Suzuki Y."/>
            <person name="Nishikawa T."/>
            <person name="Otsuki T."/>
            <person name="Sugiyama T."/>
            <person name="Irie R."/>
            <person name="Wakamatsu A."/>
            <person name="Hayashi K."/>
            <person name="Sato H."/>
            <person name="Nagai K."/>
            <person name="Kimura K."/>
            <person name="Makita H."/>
            <person name="Sekine M."/>
            <person name="Obayashi M."/>
            <person name="Nishi T."/>
            <person name="Shibahara T."/>
            <person name="Tanaka T."/>
            <person name="Ishii S."/>
            <person name="Yamamoto J."/>
            <person name="Saito K."/>
            <person name="Kawai Y."/>
            <person name="Isono Y."/>
            <person name="Nakamura Y."/>
            <person name="Nagahari K."/>
            <person name="Murakami K."/>
            <person name="Yasuda T."/>
            <person name="Iwayanagi T."/>
            <person name="Wagatsuma M."/>
            <person name="Shiratori A."/>
            <person name="Sudo H."/>
            <person name="Hosoiri T."/>
            <person name="Kaku Y."/>
            <person name="Kodaira H."/>
            <person name="Kondo H."/>
            <person name="Sugawara M."/>
            <person name="Takahashi M."/>
            <person name="Kanda K."/>
            <person name="Yokoi T."/>
            <person name="Furuya T."/>
            <person name="Kikkawa E."/>
            <person name="Omura Y."/>
            <person name="Abe K."/>
            <person name="Kamihara K."/>
            <person name="Katsuta N."/>
            <person name="Sato K."/>
            <person name="Tanikawa M."/>
            <person name="Yamazaki M."/>
            <person name="Ninomiya K."/>
            <person name="Ishibashi T."/>
            <person name="Yamashita H."/>
            <person name="Murakawa K."/>
            <person name="Fujimori K."/>
            <person name="Tanai H."/>
            <person name="Kimata M."/>
            <person name="Watanabe M."/>
            <person name="Hiraoka S."/>
            <person name="Chiba Y."/>
            <person name="Ishida S."/>
            <person name="Ono Y."/>
            <person name="Takiguchi S."/>
            <person name="Watanabe S."/>
            <person name="Yosida M."/>
            <person name="Hotuta T."/>
            <person name="Kusano J."/>
            <person name="Kanehori K."/>
            <person name="Takahashi-Fujii A."/>
            <person name="Hara H."/>
            <person name="Tanase T.-O."/>
            <person name="Nomura Y."/>
            <person name="Togiya S."/>
            <person name="Komai F."/>
            <person name="Hara R."/>
            <person name="Takeuchi K."/>
            <person name="Arita M."/>
            <person name="Imose N."/>
            <person name="Musashino K."/>
            <person name="Yuuki H."/>
            <person name="Oshima A."/>
            <person name="Sasaki N."/>
            <person name="Aotsuka S."/>
            <person name="Yoshikawa Y."/>
            <person name="Matsunawa H."/>
            <person name="Ichihara T."/>
            <person name="Shiohata N."/>
            <person name="Sano S."/>
            <person name="Moriya S."/>
            <person name="Momiyama H."/>
            <person name="Satoh N."/>
            <person name="Takami S."/>
            <person name="Terashima Y."/>
            <person name="Suzuki O."/>
            <person name="Nakagawa S."/>
            <person name="Senoh A."/>
            <person name="Mizoguchi H."/>
            <person name="Goto Y."/>
            <person name="Shimizu F."/>
            <person name="Wakebe H."/>
            <person name="Hishigaki H."/>
            <person name="Watanabe T."/>
            <person name="Sugiyama A."/>
            <person name="Takemoto M."/>
            <person name="Kawakami B."/>
            <person name="Yamazaki M."/>
            <person name="Watanabe K."/>
            <person name="Kumagai A."/>
            <person name="Itakura S."/>
            <person name="Fukuzumi Y."/>
            <person name="Fujimori Y."/>
            <person name="Komiyama M."/>
            <person name="Tashiro H."/>
            <person name="Tanigami A."/>
            <person name="Fujiwara T."/>
            <person name="Ono T."/>
            <person name="Yamada K."/>
            <person name="Fujii Y."/>
            <person name="Ozaki K."/>
            <person name="Hirao M."/>
            <person name="Ohmori Y."/>
            <person name="Kawabata A."/>
            <person name="Hikiji T."/>
            <person name="Kobatake N."/>
            <person name="Inagaki H."/>
            <person name="Ikema Y."/>
            <person name="Okamoto S."/>
            <person name="Okitani R."/>
            <person name="Kawakami T."/>
            <person name="Noguchi S."/>
            <person name="Itoh T."/>
            <person name="Shigeta K."/>
            <person name="Senba T."/>
            <person name="Matsumura K."/>
            <person name="Nakajima Y."/>
            <person name="Mizuno T."/>
            <person name="Morinaga M."/>
            <person name="Sasaki M."/>
            <person name="Togashi T."/>
            <person name="Oyama M."/>
            <person name="Hata H."/>
            <person name="Watanabe M."/>
            <person name="Komatsu T."/>
            <person name="Mizushima-Sugano J."/>
            <person name="Satoh T."/>
            <person name="Shirai Y."/>
            <person name="Takahashi Y."/>
            <person name="Nakagawa K."/>
            <person name="Okumura K."/>
            <person name="Nagase T."/>
            <person name="Nomura N."/>
            <person name="Kikuchi H."/>
            <person name="Masuho Y."/>
            <person name="Yamashita R."/>
            <person name="Nakai K."/>
            <person name="Yada T."/>
            <person name="Nakamura Y."/>
            <person name="Ohara O."/>
            <person name="Isogai T."/>
            <person name="Sugano S."/>
        </authorList>
    </citation>
    <scope>NUCLEOTIDE SEQUENCE [LARGE SCALE MRNA]</scope>
    <source>
        <tissue>Brain</tissue>
    </source>
</reference>
<reference key="3">
    <citation type="journal article" date="2006" name="Nature">
        <title>The DNA sequence, annotation and analysis of human chromosome 3.</title>
        <authorList>
            <person name="Muzny D.M."/>
            <person name="Scherer S.E."/>
            <person name="Kaul R."/>
            <person name="Wang J."/>
            <person name="Yu J."/>
            <person name="Sudbrak R."/>
            <person name="Buhay C.J."/>
            <person name="Chen R."/>
            <person name="Cree A."/>
            <person name="Ding Y."/>
            <person name="Dugan-Rocha S."/>
            <person name="Gill R."/>
            <person name="Gunaratne P."/>
            <person name="Harris R.A."/>
            <person name="Hawes A.C."/>
            <person name="Hernandez J."/>
            <person name="Hodgson A.V."/>
            <person name="Hume J."/>
            <person name="Jackson A."/>
            <person name="Khan Z.M."/>
            <person name="Kovar-Smith C."/>
            <person name="Lewis L.R."/>
            <person name="Lozado R.J."/>
            <person name="Metzker M.L."/>
            <person name="Milosavljevic A."/>
            <person name="Miner G.R."/>
            <person name="Morgan M.B."/>
            <person name="Nazareth L.V."/>
            <person name="Scott G."/>
            <person name="Sodergren E."/>
            <person name="Song X.-Z."/>
            <person name="Steffen D."/>
            <person name="Wei S."/>
            <person name="Wheeler D.A."/>
            <person name="Wright M.W."/>
            <person name="Worley K.C."/>
            <person name="Yuan Y."/>
            <person name="Zhang Z."/>
            <person name="Adams C.Q."/>
            <person name="Ansari-Lari M.A."/>
            <person name="Ayele M."/>
            <person name="Brown M.J."/>
            <person name="Chen G."/>
            <person name="Chen Z."/>
            <person name="Clendenning J."/>
            <person name="Clerc-Blankenburg K.P."/>
            <person name="Chen R."/>
            <person name="Chen Z."/>
            <person name="Davis C."/>
            <person name="Delgado O."/>
            <person name="Dinh H.H."/>
            <person name="Dong W."/>
            <person name="Draper H."/>
            <person name="Ernst S."/>
            <person name="Fu G."/>
            <person name="Gonzalez-Garay M.L."/>
            <person name="Garcia D.K."/>
            <person name="Gillett W."/>
            <person name="Gu J."/>
            <person name="Hao B."/>
            <person name="Haugen E."/>
            <person name="Havlak P."/>
            <person name="He X."/>
            <person name="Hennig S."/>
            <person name="Hu S."/>
            <person name="Huang W."/>
            <person name="Jackson L.R."/>
            <person name="Jacob L.S."/>
            <person name="Kelly S.H."/>
            <person name="Kube M."/>
            <person name="Levy R."/>
            <person name="Li Z."/>
            <person name="Liu B."/>
            <person name="Liu J."/>
            <person name="Liu W."/>
            <person name="Lu J."/>
            <person name="Maheshwari M."/>
            <person name="Nguyen B.-V."/>
            <person name="Okwuonu G.O."/>
            <person name="Palmeiri A."/>
            <person name="Pasternak S."/>
            <person name="Perez L.M."/>
            <person name="Phelps K.A."/>
            <person name="Plopper F.J."/>
            <person name="Qiang B."/>
            <person name="Raymond C."/>
            <person name="Rodriguez R."/>
            <person name="Saenphimmachak C."/>
            <person name="Santibanez J."/>
            <person name="Shen H."/>
            <person name="Shen Y."/>
            <person name="Subramanian S."/>
            <person name="Tabor P.E."/>
            <person name="Verduzco D."/>
            <person name="Waldron L."/>
            <person name="Wang J."/>
            <person name="Wang J."/>
            <person name="Wang Q."/>
            <person name="Williams G.A."/>
            <person name="Wong G.K.-S."/>
            <person name="Yao Z."/>
            <person name="Zhang J."/>
            <person name="Zhang X."/>
            <person name="Zhao G."/>
            <person name="Zhou J."/>
            <person name="Zhou Y."/>
            <person name="Nelson D."/>
            <person name="Lehrach H."/>
            <person name="Reinhardt R."/>
            <person name="Naylor S.L."/>
            <person name="Yang H."/>
            <person name="Olson M."/>
            <person name="Weinstock G."/>
            <person name="Gibbs R.A."/>
        </authorList>
    </citation>
    <scope>NUCLEOTIDE SEQUENCE [LARGE SCALE GENOMIC DNA]</scope>
</reference>
<reference key="4">
    <citation type="journal article" date="2004" name="Genome Res.">
        <title>The status, quality, and expansion of the NIH full-length cDNA project: the Mammalian Gene Collection (MGC).</title>
        <authorList>
            <consortium name="The MGC Project Team"/>
        </authorList>
    </citation>
    <scope>NUCLEOTIDE SEQUENCE [LARGE SCALE MRNA]</scope>
    <source>
        <tissue>Colon</tissue>
    </source>
</reference>
<organism>
    <name type="scientific">Homo sapiens</name>
    <name type="common">Human</name>
    <dbReference type="NCBI Taxonomy" id="9606"/>
    <lineage>
        <taxon>Eukaryota</taxon>
        <taxon>Metazoa</taxon>
        <taxon>Chordata</taxon>
        <taxon>Craniata</taxon>
        <taxon>Vertebrata</taxon>
        <taxon>Euteleostomi</taxon>
        <taxon>Mammalia</taxon>
        <taxon>Eutheria</taxon>
        <taxon>Euarchontoglires</taxon>
        <taxon>Primates</taxon>
        <taxon>Haplorrhini</taxon>
        <taxon>Catarrhini</taxon>
        <taxon>Hominidae</taxon>
        <taxon>Homo</taxon>
    </lineage>
</organism>
<keyword id="KW-0963">Cytoplasm</keyword>
<keyword id="KW-0206">Cytoskeleton</keyword>
<keyword id="KW-0539">Nucleus</keyword>
<keyword id="KW-1267">Proteomics identification</keyword>
<keyword id="KW-1185">Reference proteome</keyword>